<dbReference type="EMBL" id="AB012248">
    <property type="protein sequence ID" value="BAB09464.1"/>
    <property type="molecule type" value="Genomic_DNA"/>
</dbReference>
<dbReference type="EMBL" id="CP002688">
    <property type="protein sequence ID" value="AED95947.1"/>
    <property type="molecule type" value="Genomic_DNA"/>
</dbReference>
<dbReference type="EMBL" id="AY099743">
    <property type="protein sequence ID" value="AAM20594.1"/>
    <property type="molecule type" value="mRNA"/>
</dbReference>
<dbReference type="EMBL" id="BT000275">
    <property type="protein sequence ID" value="AAN15594.1"/>
    <property type="molecule type" value="mRNA"/>
</dbReference>
<dbReference type="RefSeq" id="NP_199856.1">
    <property type="nucleotide sequence ID" value="NM_124427.4"/>
</dbReference>
<dbReference type="BioGRID" id="20359">
    <property type="interactions" value="1"/>
</dbReference>
<dbReference type="IntAct" id="Q9FK27">
    <property type="interactions" value="1"/>
</dbReference>
<dbReference type="STRING" id="3702.Q9FK27"/>
<dbReference type="PaxDb" id="3702-AT5G50450.1"/>
<dbReference type="EnsemblPlants" id="AT5G50450.1">
    <property type="protein sequence ID" value="AT5G50450.1"/>
    <property type="gene ID" value="AT5G50450"/>
</dbReference>
<dbReference type="GeneID" id="835113"/>
<dbReference type="Gramene" id="AT5G50450.1">
    <property type="protein sequence ID" value="AT5G50450.1"/>
    <property type="gene ID" value="AT5G50450"/>
</dbReference>
<dbReference type="KEGG" id="ath:AT5G50450"/>
<dbReference type="Araport" id="AT5G50450"/>
<dbReference type="TAIR" id="AT5G50450"/>
<dbReference type="eggNOG" id="ENOG502RZU0">
    <property type="taxonomic scope" value="Eukaryota"/>
</dbReference>
<dbReference type="HOGENOM" id="CLU_042104_1_0_1"/>
<dbReference type="InParanoid" id="Q9FK27"/>
<dbReference type="OMA" id="KWSDSAH"/>
<dbReference type="PhylomeDB" id="Q9FK27"/>
<dbReference type="PRO" id="PR:Q9FK27"/>
<dbReference type="Proteomes" id="UP000006548">
    <property type="component" value="Chromosome 5"/>
</dbReference>
<dbReference type="ExpressionAtlas" id="Q9FK27">
    <property type="expression patterns" value="baseline and differential"/>
</dbReference>
<dbReference type="GO" id="GO:0008270">
    <property type="term" value="F:zinc ion binding"/>
    <property type="evidence" value="ECO:0007669"/>
    <property type="project" value="UniProtKB-KW"/>
</dbReference>
<dbReference type="FunFam" id="6.10.140.2220:FF:000033">
    <property type="entry name" value="Predicted protein"/>
    <property type="match status" value="1"/>
</dbReference>
<dbReference type="Gene3D" id="6.10.140.2220">
    <property type="match status" value="1"/>
</dbReference>
<dbReference type="Gene3D" id="1.25.40.10">
    <property type="entry name" value="Tetratricopeptide repeat domain"/>
    <property type="match status" value="1"/>
</dbReference>
<dbReference type="InterPro" id="IPR057136">
    <property type="entry name" value="At2g35280_TPR_dom"/>
</dbReference>
<dbReference type="InterPro" id="IPR044508">
    <property type="entry name" value="At5g50450/At1g67340-like"/>
</dbReference>
<dbReference type="InterPro" id="IPR006597">
    <property type="entry name" value="Sel1-like"/>
</dbReference>
<dbReference type="InterPro" id="IPR011990">
    <property type="entry name" value="TPR-like_helical_dom_sf"/>
</dbReference>
<dbReference type="InterPro" id="IPR002893">
    <property type="entry name" value="Znf_MYND"/>
</dbReference>
<dbReference type="PANTHER" id="PTHR46758">
    <property type="entry name" value="MYND DOMAIN-CONTAINING"/>
    <property type="match status" value="1"/>
</dbReference>
<dbReference type="PANTHER" id="PTHR46758:SF9">
    <property type="entry name" value="MYND-TYPE DOMAIN-CONTAINING PROTEIN"/>
    <property type="match status" value="1"/>
</dbReference>
<dbReference type="Pfam" id="PF08238">
    <property type="entry name" value="Sel1"/>
    <property type="match status" value="1"/>
</dbReference>
<dbReference type="Pfam" id="PF23310">
    <property type="entry name" value="TPR_27"/>
    <property type="match status" value="1"/>
</dbReference>
<dbReference type="Pfam" id="PF01753">
    <property type="entry name" value="zf-MYND"/>
    <property type="match status" value="1"/>
</dbReference>
<dbReference type="SUPFAM" id="SSF81901">
    <property type="entry name" value="HCP-like"/>
    <property type="match status" value="1"/>
</dbReference>
<dbReference type="SUPFAM" id="SSF144232">
    <property type="entry name" value="HIT/MYND zinc finger-like"/>
    <property type="match status" value="1"/>
</dbReference>
<dbReference type="PROSITE" id="PS01360">
    <property type="entry name" value="ZF_MYND_1"/>
    <property type="match status" value="1"/>
</dbReference>
<dbReference type="PROSITE" id="PS50865">
    <property type="entry name" value="ZF_MYND_2"/>
    <property type="match status" value="1"/>
</dbReference>
<name>FB342_ARATH</name>
<protein>
    <recommendedName>
        <fullName>F-box protein At5g50450</fullName>
    </recommendedName>
</protein>
<proteinExistence type="evidence at transcript level"/>
<evidence type="ECO:0000255" key="1">
    <source>
        <dbReference type="PROSITE-ProRule" id="PRU00134"/>
    </source>
</evidence>
<reference key="1">
    <citation type="journal article" date="1998" name="DNA Res.">
        <title>Structural analysis of Arabidopsis thaliana chromosome 5. VI. Sequence features of the regions of 1,367,185 bp covered by 19 physically assigned P1 and TAC clones.</title>
        <authorList>
            <person name="Kotani H."/>
            <person name="Nakamura Y."/>
            <person name="Sato S."/>
            <person name="Asamizu E."/>
            <person name="Kaneko T."/>
            <person name="Miyajima N."/>
            <person name="Tabata S."/>
        </authorList>
    </citation>
    <scope>NUCLEOTIDE SEQUENCE [LARGE SCALE GENOMIC DNA]</scope>
    <source>
        <strain>cv. Columbia</strain>
    </source>
</reference>
<reference key="2">
    <citation type="journal article" date="2017" name="Plant J.">
        <title>Araport11: a complete reannotation of the Arabidopsis thaliana reference genome.</title>
        <authorList>
            <person name="Cheng C.Y."/>
            <person name="Krishnakumar V."/>
            <person name="Chan A.P."/>
            <person name="Thibaud-Nissen F."/>
            <person name="Schobel S."/>
            <person name="Town C.D."/>
        </authorList>
    </citation>
    <scope>GENOME REANNOTATION</scope>
    <source>
        <strain>cv. Columbia</strain>
    </source>
</reference>
<reference key="3">
    <citation type="journal article" date="2003" name="Science">
        <title>Empirical analysis of transcriptional activity in the Arabidopsis genome.</title>
        <authorList>
            <person name="Yamada K."/>
            <person name="Lim J."/>
            <person name="Dale J.M."/>
            <person name="Chen H."/>
            <person name="Shinn P."/>
            <person name="Palm C.J."/>
            <person name="Southwick A.M."/>
            <person name="Wu H.C."/>
            <person name="Kim C.J."/>
            <person name="Nguyen M."/>
            <person name="Pham P.K."/>
            <person name="Cheuk R.F."/>
            <person name="Karlin-Newmann G."/>
            <person name="Liu S.X."/>
            <person name="Lam B."/>
            <person name="Sakano H."/>
            <person name="Wu T."/>
            <person name="Yu G."/>
            <person name="Miranda M."/>
            <person name="Quach H.L."/>
            <person name="Tripp M."/>
            <person name="Chang C.H."/>
            <person name="Lee J.M."/>
            <person name="Toriumi M.J."/>
            <person name="Chan M.M."/>
            <person name="Tang C.C."/>
            <person name="Onodera C.S."/>
            <person name="Deng J.M."/>
            <person name="Akiyama K."/>
            <person name="Ansari Y."/>
            <person name="Arakawa T."/>
            <person name="Banh J."/>
            <person name="Banno F."/>
            <person name="Bowser L."/>
            <person name="Brooks S.Y."/>
            <person name="Carninci P."/>
            <person name="Chao Q."/>
            <person name="Choy N."/>
            <person name="Enju A."/>
            <person name="Goldsmith A.D."/>
            <person name="Gurjal M."/>
            <person name="Hansen N.F."/>
            <person name="Hayashizaki Y."/>
            <person name="Johnson-Hopson C."/>
            <person name="Hsuan V.W."/>
            <person name="Iida K."/>
            <person name="Karnes M."/>
            <person name="Khan S."/>
            <person name="Koesema E."/>
            <person name="Ishida J."/>
            <person name="Jiang P.X."/>
            <person name="Jones T."/>
            <person name="Kawai J."/>
            <person name="Kamiya A."/>
            <person name="Meyers C."/>
            <person name="Nakajima M."/>
            <person name="Narusaka M."/>
            <person name="Seki M."/>
            <person name="Sakurai T."/>
            <person name="Satou M."/>
            <person name="Tamse R."/>
            <person name="Vaysberg M."/>
            <person name="Wallender E.K."/>
            <person name="Wong C."/>
            <person name="Yamamura Y."/>
            <person name="Yuan S."/>
            <person name="Shinozaki K."/>
            <person name="Davis R.W."/>
            <person name="Theologis A."/>
            <person name="Ecker J.R."/>
        </authorList>
    </citation>
    <scope>NUCLEOTIDE SEQUENCE [LARGE SCALE MRNA]</scope>
    <source>
        <strain>cv. Columbia</strain>
    </source>
</reference>
<accession>Q9FK27</accession>
<organism>
    <name type="scientific">Arabidopsis thaliana</name>
    <name type="common">Mouse-ear cress</name>
    <dbReference type="NCBI Taxonomy" id="3702"/>
    <lineage>
        <taxon>Eukaryota</taxon>
        <taxon>Viridiplantae</taxon>
        <taxon>Streptophyta</taxon>
        <taxon>Embryophyta</taxon>
        <taxon>Tracheophyta</taxon>
        <taxon>Spermatophyta</taxon>
        <taxon>Magnoliopsida</taxon>
        <taxon>eudicotyledons</taxon>
        <taxon>Gunneridae</taxon>
        <taxon>Pentapetalae</taxon>
        <taxon>rosids</taxon>
        <taxon>malvids</taxon>
        <taxon>Brassicales</taxon>
        <taxon>Brassicaceae</taxon>
        <taxon>Camelineae</taxon>
        <taxon>Arabidopsis</taxon>
    </lineage>
</organism>
<sequence length="336" mass="36812">MTHLNKKQRLENNHNNTVNNHFEDLHDDLIISILRKLATSASSPSDFLTVLSTCKRLNRLGLHPLVLSKAGTQTLAVTAEKWSDSSHKFLKLCVNAGNIDASYSLGMIRFYCLQNPVSGASLMAKAAIKSHAPALYSLSVIQFNGSGGSKTDKNLRAGVALCARSAYLGHVDALRELGHCLQDGYGVPRDVSEGRRLLIQANARELACSLRSYLSLKSGDENETLTDLSVVPVQEIHPVNRFLKEWFSSGRVDLAEGLRMCSHGGCGRPETRAHEFRRCSVCGKVNYCSRGCQALDWRAKHKVECTPLDLWVAAAAEIGDDGEAVAVEIDDNHGER</sequence>
<gene>
    <name type="ordered locus">At5g50450</name>
    <name type="ORF">MXI22.17</name>
</gene>
<feature type="chain" id="PRO_0000396058" description="F-box protein At5g50450">
    <location>
        <begin position="1"/>
        <end position="336"/>
    </location>
</feature>
<feature type="domain" description="F-box">
    <location>
        <begin position="19"/>
        <end position="70"/>
    </location>
</feature>
<feature type="zinc finger region" description="MYND-type; atypical" evidence="1">
    <location>
        <begin position="263"/>
        <end position="305"/>
    </location>
</feature>
<feature type="binding site" evidence="1">
    <location>
        <position position="263"/>
    </location>
    <ligand>
        <name>Zn(2+)</name>
        <dbReference type="ChEBI" id="CHEBI:29105"/>
        <label>1</label>
    </ligand>
</feature>
<feature type="binding site" evidence="1">
    <location>
        <position position="266"/>
    </location>
    <ligand>
        <name>Zn(2+)</name>
        <dbReference type="ChEBI" id="CHEBI:29105"/>
        <label>1</label>
    </ligand>
</feature>
<feature type="binding site" evidence="1">
    <location>
        <position position="279"/>
    </location>
    <ligand>
        <name>Zn(2+)</name>
        <dbReference type="ChEBI" id="CHEBI:29105"/>
        <label>2</label>
    </ligand>
</feature>
<feature type="binding site" evidence="1">
    <location>
        <position position="282"/>
    </location>
    <ligand>
        <name>Zn(2+)</name>
        <dbReference type="ChEBI" id="CHEBI:29105"/>
        <label>2</label>
    </ligand>
</feature>
<feature type="binding site" evidence="1">
    <location>
        <position position="288"/>
    </location>
    <ligand>
        <name>Zn(2+)</name>
        <dbReference type="ChEBI" id="CHEBI:29105"/>
        <label>1</label>
    </ligand>
</feature>
<feature type="binding site" evidence="1">
    <location>
        <position position="292"/>
    </location>
    <ligand>
        <name>Zn(2+)</name>
        <dbReference type="ChEBI" id="CHEBI:29105"/>
        <label>1</label>
    </ligand>
</feature>
<feature type="binding site" evidence="1">
    <location>
        <position position="301"/>
    </location>
    <ligand>
        <name>Zn(2+)</name>
        <dbReference type="ChEBI" id="CHEBI:29105"/>
        <label>2</label>
    </ligand>
</feature>
<feature type="binding site" evidence="1">
    <location>
        <position position="305"/>
    </location>
    <ligand>
        <name>Zn(2+)</name>
        <dbReference type="ChEBI" id="CHEBI:29105"/>
        <label>2</label>
    </ligand>
</feature>
<keyword id="KW-0479">Metal-binding</keyword>
<keyword id="KW-1185">Reference proteome</keyword>
<keyword id="KW-0862">Zinc</keyword>
<keyword id="KW-0863">Zinc-finger</keyword>